<accession>B9DME7</accession>
<comment type="function">
    <text evidence="1">F(1)F(0) ATP synthase produces ATP from ADP in the presence of a proton or sodium gradient. F-type ATPases consist of two structural domains, F(1) containing the extramembraneous catalytic core and F(0) containing the membrane proton channel, linked together by a central stalk and a peripheral stalk. During catalysis, ATP synthesis in the catalytic domain of F(1) is coupled via a rotary mechanism of the central stalk subunits to proton translocation.</text>
</comment>
<comment type="function">
    <text evidence="1">This protein is part of the stalk that links CF(0) to CF(1). It either transmits conformational changes from CF(0) to CF(1) or is implicated in proton conduction.</text>
</comment>
<comment type="subunit">
    <text evidence="1">F-type ATPases have 2 components, F(1) - the catalytic core - and F(0) - the membrane proton channel. F(1) has five subunits: alpha(3), beta(3), gamma(1), delta(1), epsilon(1). F(0) has three main subunits: a(1), b(2) and c(10-14). The alpha and beta chains form an alternating ring which encloses part of the gamma chain. F(1) is attached to F(0) by a central stalk formed by the gamma and epsilon chains, while a peripheral stalk is formed by the delta and b chains.</text>
</comment>
<comment type="subcellular location">
    <subcellularLocation>
        <location evidence="1">Cell membrane</location>
        <topology evidence="1">Peripheral membrane protein</topology>
    </subcellularLocation>
</comment>
<comment type="similarity">
    <text evidence="1">Belongs to the ATPase delta chain family.</text>
</comment>
<evidence type="ECO:0000255" key="1">
    <source>
        <dbReference type="HAMAP-Rule" id="MF_01416"/>
    </source>
</evidence>
<organism>
    <name type="scientific">Staphylococcus carnosus (strain TM300)</name>
    <dbReference type="NCBI Taxonomy" id="396513"/>
    <lineage>
        <taxon>Bacteria</taxon>
        <taxon>Bacillati</taxon>
        <taxon>Bacillota</taxon>
        <taxon>Bacilli</taxon>
        <taxon>Bacillales</taxon>
        <taxon>Staphylococcaceae</taxon>
        <taxon>Staphylococcus</taxon>
    </lineage>
</organism>
<feature type="chain" id="PRO_1000184803" description="ATP synthase subunit delta">
    <location>
        <begin position="1"/>
        <end position="179"/>
    </location>
</feature>
<protein>
    <recommendedName>
        <fullName evidence="1">ATP synthase subunit delta</fullName>
    </recommendedName>
    <alternativeName>
        <fullName evidence="1">ATP synthase F(1) sector subunit delta</fullName>
    </alternativeName>
    <alternativeName>
        <fullName evidence="1">F-type ATPase subunit delta</fullName>
        <shortName evidence="1">F-ATPase subunit delta</shortName>
    </alternativeName>
</protein>
<dbReference type="EMBL" id="AM295250">
    <property type="protein sequence ID" value="CAL28516.1"/>
    <property type="molecule type" value="Genomic_DNA"/>
</dbReference>
<dbReference type="RefSeq" id="WP_015900856.1">
    <property type="nucleotide sequence ID" value="NC_012121.1"/>
</dbReference>
<dbReference type="SMR" id="B9DME7"/>
<dbReference type="GeneID" id="93794063"/>
<dbReference type="KEGG" id="sca:SCA_1610"/>
<dbReference type="eggNOG" id="COG0712">
    <property type="taxonomic scope" value="Bacteria"/>
</dbReference>
<dbReference type="HOGENOM" id="CLU_085114_4_1_9"/>
<dbReference type="OrthoDB" id="9802471at2"/>
<dbReference type="BioCyc" id="SCAR396513:SCA_RS08175-MONOMER"/>
<dbReference type="Proteomes" id="UP000000444">
    <property type="component" value="Chromosome"/>
</dbReference>
<dbReference type="GO" id="GO:0005886">
    <property type="term" value="C:plasma membrane"/>
    <property type="evidence" value="ECO:0007669"/>
    <property type="project" value="UniProtKB-SubCell"/>
</dbReference>
<dbReference type="GO" id="GO:0045259">
    <property type="term" value="C:proton-transporting ATP synthase complex"/>
    <property type="evidence" value="ECO:0007669"/>
    <property type="project" value="UniProtKB-KW"/>
</dbReference>
<dbReference type="GO" id="GO:0046933">
    <property type="term" value="F:proton-transporting ATP synthase activity, rotational mechanism"/>
    <property type="evidence" value="ECO:0007669"/>
    <property type="project" value="UniProtKB-UniRule"/>
</dbReference>
<dbReference type="Gene3D" id="1.10.520.20">
    <property type="entry name" value="N-terminal domain of the delta subunit of the F1F0-ATP synthase"/>
    <property type="match status" value="1"/>
</dbReference>
<dbReference type="HAMAP" id="MF_01416">
    <property type="entry name" value="ATP_synth_delta_bact"/>
    <property type="match status" value="1"/>
</dbReference>
<dbReference type="InterPro" id="IPR026015">
    <property type="entry name" value="ATP_synth_OSCP/delta_N_sf"/>
</dbReference>
<dbReference type="InterPro" id="IPR000711">
    <property type="entry name" value="ATPase_OSCP/dsu"/>
</dbReference>
<dbReference type="NCBIfam" id="TIGR01145">
    <property type="entry name" value="ATP_synt_delta"/>
    <property type="match status" value="1"/>
</dbReference>
<dbReference type="NCBIfam" id="NF004399">
    <property type="entry name" value="PRK05758.1-1"/>
    <property type="match status" value="1"/>
</dbReference>
<dbReference type="PANTHER" id="PTHR11910">
    <property type="entry name" value="ATP SYNTHASE DELTA CHAIN"/>
    <property type="match status" value="1"/>
</dbReference>
<dbReference type="Pfam" id="PF00213">
    <property type="entry name" value="OSCP"/>
    <property type="match status" value="1"/>
</dbReference>
<dbReference type="PRINTS" id="PR00125">
    <property type="entry name" value="ATPASEDELTA"/>
</dbReference>
<dbReference type="SUPFAM" id="SSF47928">
    <property type="entry name" value="N-terminal domain of the delta subunit of the F1F0-ATP synthase"/>
    <property type="match status" value="1"/>
</dbReference>
<name>ATPD_STACT</name>
<sequence length="179" mass="20257">MAIIAKKYAQALYETSLDKDVLDLMYDEFAAVDEAVIPNQDKLKAFDSDPKNIAEDRNSLVESAFKGINEYLKNMLFVMAENRHLSILPEVFKAFEGLYNQYYNQDFATVESVHELSQDELDKVGEALIQRTGLSKLIITNVINKSLIGGIRAKVGTKVFDGSIQNDLAQIERKFIRTK</sequence>
<gene>
    <name evidence="1" type="primary">atpH</name>
    <name type="ordered locus">Sca_1610</name>
</gene>
<reference key="1">
    <citation type="journal article" date="2009" name="Appl. Environ. Microbiol.">
        <title>Genome analysis of the meat starter culture bacterium Staphylococcus carnosus TM300.</title>
        <authorList>
            <person name="Rosenstein R."/>
            <person name="Nerz C."/>
            <person name="Biswas L."/>
            <person name="Resch A."/>
            <person name="Raddatz G."/>
            <person name="Schuster S.C."/>
            <person name="Goetz F."/>
        </authorList>
    </citation>
    <scope>NUCLEOTIDE SEQUENCE [LARGE SCALE GENOMIC DNA]</scope>
    <source>
        <strain>TM300</strain>
    </source>
</reference>
<keyword id="KW-0066">ATP synthesis</keyword>
<keyword id="KW-1003">Cell membrane</keyword>
<keyword id="KW-0139">CF(1)</keyword>
<keyword id="KW-0375">Hydrogen ion transport</keyword>
<keyword id="KW-0406">Ion transport</keyword>
<keyword id="KW-0472">Membrane</keyword>
<keyword id="KW-1185">Reference proteome</keyword>
<keyword id="KW-0813">Transport</keyword>
<proteinExistence type="inferred from homology"/>